<evidence type="ECO:0000250" key="1"/>
<evidence type="ECO:0000250" key="2">
    <source>
        <dbReference type="UniProtKB" id="Q41387"/>
    </source>
</evidence>
<evidence type="ECO:0000255" key="3"/>
<evidence type="ECO:0000269" key="4">
    <source>
    </source>
</evidence>
<evidence type="ECO:0000305" key="5"/>
<evidence type="ECO:0007829" key="6">
    <source>
        <dbReference type="PDB" id="7OUI"/>
    </source>
</evidence>
<comment type="function">
    <text evidence="4">Stabilizes dimeric photosystem II (PSII). In its absence no dimeric PSII accumulates and there is a reduction of monomeric PSII.</text>
</comment>
<comment type="subunit">
    <text evidence="2">Part of the photosystem II complex. PSII is composed of 1 copy each of membrane proteins PsbA, PsbB, PsbC, PsbD, numerous small proteins, at least 3 peripheral proteins of the oxygen-evolving complex and a large number of cofactors. It forms dimeric complexes. Found in monomeric, dimeric and in etioplastic PSII (i.e. before PSII is fully assembled and functional).</text>
</comment>
<comment type="subcellular location">
    <subcellularLocation>
        <location>Plastid</location>
        <location>Chloroplast thylakoid membrane</location>
        <topology>Single-pass membrane protein</topology>
    </subcellularLocation>
    <text evidence="2">The N-terminus is found within the thylakoid lumen (By similarity).</text>
</comment>
<comment type="disruption phenotype">
    <text evidence="4">Plants have no obvious physical phenotype. However, there is no dimeric photosystem II (PSII) and there is only a 50% rate of normal oxygen evolution. There is an approximately 40% decrease in the amount of PSII and the oxygen evolving complex in these plants. The monomeric PSII that remains functions normally with respect to electron transfer.</text>
</comment>
<comment type="similarity">
    <text evidence="5">Belongs to the psbW family.</text>
</comment>
<sequence>MASFTASASTVSAARPALLLKPTVAISAPVLGLPPMGKKKGGVRCSMETKQGNVSVMGAGVSAAATAALTAVMSNPAMALVDERMSTEGTGLPFGLSNNLLGWILFGVFGLIWTFFFVYTSSLEEDEESGLSL</sequence>
<proteinExistence type="evidence at protein level"/>
<keyword id="KW-0002">3D-structure</keyword>
<keyword id="KW-0150">Chloroplast</keyword>
<keyword id="KW-0472">Membrane</keyword>
<keyword id="KW-0602">Photosynthesis</keyword>
<keyword id="KW-0604">Photosystem II</keyword>
<keyword id="KW-0934">Plastid</keyword>
<keyword id="KW-1185">Reference proteome</keyword>
<keyword id="KW-0793">Thylakoid</keyword>
<keyword id="KW-0809">Transit peptide</keyword>
<keyword id="KW-0812">Transmembrane</keyword>
<keyword id="KW-1133">Transmembrane helix</keyword>
<feature type="transit peptide" description="Chloroplast" evidence="3">
    <location>
        <begin position="1"/>
        <end position="53"/>
    </location>
</feature>
<feature type="transit peptide" description="Thylakoid" evidence="3">
    <location>
        <begin position="54"/>
        <end position="79"/>
    </location>
</feature>
<feature type="chain" id="PRO_0000271554" description="Photosystem II reaction center W protein, chloroplastic">
    <location>
        <begin position="80"/>
        <end position="133"/>
    </location>
</feature>
<feature type="topological domain" description="Lumenal, thylakoid" evidence="1">
    <location>
        <begin position="80"/>
        <end position="99"/>
    </location>
</feature>
<feature type="transmembrane region" description="Helical" evidence="3">
    <location>
        <begin position="100"/>
        <end position="120"/>
    </location>
</feature>
<feature type="topological domain" description="Stromal" evidence="1">
    <location>
        <begin position="121"/>
        <end position="133"/>
    </location>
</feature>
<feature type="sequence conflict" description="In Ref. 1; CAA62296." evidence="5" ref="1">
    <original>V</original>
    <variation>A</variation>
    <location>
        <position position="118"/>
    </location>
</feature>
<feature type="helix" evidence="6">
    <location>
        <begin position="93"/>
        <end position="95"/>
    </location>
</feature>
<feature type="helix" evidence="6">
    <location>
        <begin position="99"/>
        <end position="120"/>
    </location>
</feature>
<protein>
    <recommendedName>
        <fullName>Photosystem II reaction center W protein, chloroplastic</fullName>
    </recommendedName>
    <alternativeName>
        <fullName>PSII 6.1 kDa protein</fullName>
    </alternativeName>
</protein>
<accession>Q39194</accession>
<accession>O04338</accession>
<gene>
    <name type="primary">PSBW</name>
    <name type="ordered locus">At2g30570</name>
    <name type="ORF">T6B20.8</name>
</gene>
<organism>
    <name type="scientific">Arabidopsis thaliana</name>
    <name type="common">Mouse-ear cress</name>
    <dbReference type="NCBI Taxonomy" id="3702"/>
    <lineage>
        <taxon>Eukaryota</taxon>
        <taxon>Viridiplantae</taxon>
        <taxon>Streptophyta</taxon>
        <taxon>Embryophyta</taxon>
        <taxon>Tracheophyta</taxon>
        <taxon>Spermatophyta</taxon>
        <taxon>Magnoliopsida</taxon>
        <taxon>eudicotyledons</taxon>
        <taxon>Gunneridae</taxon>
        <taxon>Pentapetalae</taxon>
        <taxon>rosids</taxon>
        <taxon>malvids</taxon>
        <taxon>Brassicales</taxon>
        <taxon>Brassicaceae</taxon>
        <taxon>Camelineae</taxon>
        <taxon>Arabidopsis</taxon>
    </lineage>
</organism>
<reference key="1">
    <citation type="submission" date="1995-08" db="EMBL/GenBank/DDBJ databases">
        <title>Characterization of PsbW, the only nuclear-encoded component of the photosystem II reaction center.</title>
        <authorList>
            <person name="Lorkovic Z.J."/>
            <person name="Schroeder W.P."/>
            <person name="Pakrasi H.B."/>
            <person name="Irrgang K.-D."/>
            <person name="Herrmann R.G."/>
            <person name="Oelmueller R."/>
        </authorList>
    </citation>
    <scope>NUCLEOTIDE SEQUENCE [GENOMIC DNA]</scope>
    <source>
        <strain>cv. Landsberg erecta</strain>
        <tissue>Seedling</tissue>
    </source>
</reference>
<reference key="2">
    <citation type="journal article" date="1999" name="Nature">
        <title>Sequence and analysis of chromosome 2 of the plant Arabidopsis thaliana.</title>
        <authorList>
            <person name="Lin X."/>
            <person name="Kaul S."/>
            <person name="Rounsley S.D."/>
            <person name="Shea T.P."/>
            <person name="Benito M.-I."/>
            <person name="Town C.D."/>
            <person name="Fujii C.Y."/>
            <person name="Mason T.M."/>
            <person name="Bowman C.L."/>
            <person name="Barnstead M.E."/>
            <person name="Feldblyum T.V."/>
            <person name="Buell C.R."/>
            <person name="Ketchum K.A."/>
            <person name="Lee J.J."/>
            <person name="Ronning C.M."/>
            <person name="Koo H.L."/>
            <person name="Moffat K.S."/>
            <person name="Cronin L.A."/>
            <person name="Shen M."/>
            <person name="Pai G."/>
            <person name="Van Aken S."/>
            <person name="Umayam L."/>
            <person name="Tallon L.J."/>
            <person name="Gill J.E."/>
            <person name="Adams M.D."/>
            <person name="Carrera A.J."/>
            <person name="Creasy T.H."/>
            <person name="Goodman H.M."/>
            <person name="Somerville C.R."/>
            <person name="Copenhaver G.P."/>
            <person name="Preuss D."/>
            <person name="Nierman W.C."/>
            <person name="White O."/>
            <person name="Eisen J.A."/>
            <person name="Salzberg S.L."/>
            <person name="Fraser C.M."/>
            <person name="Venter J.C."/>
        </authorList>
    </citation>
    <scope>NUCLEOTIDE SEQUENCE [LARGE SCALE GENOMIC DNA]</scope>
    <source>
        <strain>cv. Columbia</strain>
    </source>
</reference>
<reference key="3">
    <citation type="journal article" date="2017" name="Plant J.">
        <title>Araport11: a complete reannotation of the Arabidopsis thaliana reference genome.</title>
        <authorList>
            <person name="Cheng C.Y."/>
            <person name="Krishnakumar V."/>
            <person name="Chan A.P."/>
            <person name="Thibaud-Nissen F."/>
            <person name="Schobel S."/>
            <person name="Town C.D."/>
        </authorList>
    </citation>
    <scope>GENOME REANNOTATION</scope>
    <source>
        <strain>cv. Columbia</strain>
    </source>
</reference>
<reference key="4">
    <citation type="journal article" date="2003" name="Science">
        <title>Empirical analysis of transcriptional activity in the Arabidopsis genome.</title>
        <authorList>
            <person name="Yamada K."/>
            <person name="Lim J."/>
            <person name="Dale J.M."/>
            <person name="Chen H."/>
            <person name="Shinn P."/>
            <person name="Palm C.J."/>
            <person name="Southwick A.M."/>
            <person name="Wu H.C."/>
            <person name="Kim C.J."/>
            <person name="Nguyen M."/>
            <person name="Pham P.K."/>
            <person name="Cheuk R.F."/>
            <person name="Karlin-Newmann G."/>
            <person name="Liu S.X."/>
            <person name="Lam B."/>
            <person name="Sakano H."/>
            <person name="Wu T."/>
            <person name="Yu G."/>
            <person name="Miranda M."/>
            <person name="Quach H.L."/>
            <person name="Tripp M."/>
            <person name="Chang C.H."/>
            <person name="Lee J.M."/>
            <person name="Toriumi M.J."/>
            <person name="Chan M.M."/>
            <person name="Tang C.C."/>
            <person name="Onodera C.S."/>
            <person name="Deng J.M."/>
            <person name="Akiyama K."/>
            <person name="Ansari Y."/>
            <person name="Arakawa T."/>
            <person name="Banh J."/>
            <person name="Banno F."/>
            <person name="Bowser L."/>
            <person name="Brooks S.Y."/>
            <person name="Carninci P."/>
            <person name="Chao Q."/>
            <person name="Choy N."/>
            <person name="Enju A."/>
            <person name="Goldsmith A.D."/>
            <person name="Gurjal M."/>
            <person name="Hansen N.F."/>
            <person name="Hayashizaki Y."/>
            <person name="Johnson-Hopson C."/>
            <person name="Hsuan V.W."/>
            <person name="Iida K."/>
            <person name="Karnes M."/>
            <person name="Khan S."/>
            <person name="Koesema E."/>
            <person name="Ishida J."/>
            <person name="Jiang P.X."/>
            <person name="Jones T."/>
            <person name="Kawai J."/>
            <person name="Kamiya A."/>
            <person name="Meyers C."/>
            <person name="Nakajima M."/>
            <person name="Narusaka M."/>
            <person name="Seki M."/>
            <person name="Sakurai T."/>
            <person name="Satou M."/>
            <person name="Tamse R."/>
            <person name="Vaysberg M."/>
            <person name="Wallender E.K."/>
            <person name="Wong C."/>
            <person name="Yamamura Y."/>
            <person name="Yuan S."/>
            <person name="Shinozaki K."/>
            <person name="Davis R.W."/>
            <person name="Theologis A."/>
            <person name="Ecker J.R."/>
        </authorList>
    </citation>
    <scope>NUCLEOTIDE SEQUENCE [LARGE SCALE MRNA]</scope>
    <source>
        <strain>cv. Columbia</strain>
    </source>
</reference>
<reference key="5">
    <citation type="submission" date="2002-03" db="EMBL/GenBank/DDBJ databases">
        <title>Full-length cDNA from Arabidopsis thaliana.</title>
        <authorList>
            <person name="Brover V.V."/>
            <person name="Troukhan M.E."/>
            <person name="Alexandrov N.A."/>
            <person name="Lu Y.-P."/>
            <person name="Flavell R.B."/>
            <person name="Feldmann K.A."/>
        </authorList>
    </citation>
    <scope>NUCLEOTIDE SEQUENCE [LARGE SCALE MRNA]</scope>
</reference>
<reference key="6">
    <citation type="journal article" date="2000" name="J. Biol. Chem.">
        <title>The low molecular mass PsbW protein is involved in the stabilization of the dimeric photosystem II complex in Arabidopsis thaliana.</title>
        <authorList>
            <person name="Shi L.-X."/>
            <person name="Lorkovic Z.J."/>
            <person name="Oelmueller R."/>
            <person name="Schroeder W.P."/>
        </authorList>
    </citation>
    <scope>FUNCTION</scope>
    <scope>DISRUPTION PHENOTYPE</scope>
    <source>
        <strain>cv. Columbia</strain>
        <tissue>Leaf</tissue>
    </source>
</reference>
<dbReference type="EMBL" id="X90769">
    <property type="protein sequence ID" value="CAA62296.1"/>
    <property type="molecule type" value="Genomic_DNA"/>
</dbReference>
<dbReference type="EMBL" id="U93215">
    <property type="protein sequence ID" value="AAB63080.1"/>
    <property type="molecule type" value="Genomic_DNA"/>
</dbReference>
<dbReference type="EMBL" id="CP002685">
    <property type="protein sequence ID" value="AEC08409.1"/>
    <property type="molecule type" value="Genomic_DNA"/>
</dbReference>
<dbReference type="EMBL" id="AF325042">
    <property type="protein sequence ID" value="AAG40394.1"/>
    <property type="molecule type" value="mRNA"/>
</dbReference>
<dbReference type="EMBL" id="AF375448">
    <property type="protein sequence ID" value="AAK53032.1"/>
    <property type="molecule type" value="mRNA"/>
</dbReference>
<dbReference type="EMBL" id="AY143958">
    <property type="protein sequence ID" value="AAN28897.1"/>
    <property type="molecule type" value="mRNA"/>
</dbReference>
<dbReference type="EMBL" id="AY087402">
    <property type="protein sequence ID" value="AAM64951.1"/>
    <property type="molecule type" value="mRNA"/>
</dbReference>
<dbReference type="PIR" id="A84710">
    <property type="entry name" value="A84710"/>
</dbReference>
<dbReference type="PIR" id="S60662">
    <property type="entry name" value="S60662"/>
</dbReference>
<dbReference type="RefSeq" id="NP_180615.1">
    <property type="nucleotide sequence ID" value="NM_128609.4"/>
</dbReference>
<dbReference type="PDB" id="5MDX">
    <property type="method" value="EM"/>
    <property type="resolution" value="5.30 A"/>
    <property type="chains" value="W/w=80-133"/>
</dbReference>
<dbReference type="PDB" id="7OUI">
    <property type="method" value="EM"/>
    <property type="resolution" value="2.79 A"/>
    <property type="chains" value="W/w=80-133"/>
</dbReference>
<dbReference type="PDBsum" id="5MDX"/>
<dbReference type="PDBsum" id="7OUI"/>
<dbReference type="EMDB" id="EMD-13078"/>
<dbReference type="EMDB" id="EMD-3491"/>
<dbReference type="SMR" id="Q39194"/>
<dbReference type="BioGRID" id="2955">
    <property type="interactions" value="1"/>
</dbReference>
<dbReference type="FunCoup" id="Q39194">
    <property type="interactions" value="1025"/>
</dbReference>
<dbReference type="IntAct" id="Q39194">
    <property type="interactions" value="1"/>
</dbReference>
<dbReference type="STRING" id="3702.Q39194"/>
<dbReference type="TCDB" id="3.E.2.2.3">
    <property type="family name" value="the photosynthetic reaction center (prc) family"/>
</dbReference>
<dbReference type="PaxDb" id="3702-AT2G30570.1"/>
<dbReference type="EnsemblPlants" id="AT2G30570.1">
    <property type="protein sequence ID" value="AT2G30570.1"/>
    <property type="gene ID" value="AT2G30570"/>
</dbReference>
<dbReference type="GeneID" id="817606"/>
<dbReference type="Gramene" id="AT2G30570.1">
    <property type="protein sequence ID" value="AT2G30570.1"/>
    <property type="gene ID" value="AT2G30570"/>
</dbReference>
<dbReference type="KEGG" id="ath:AT2G30570"/>
<dbReference type="Araport" id="AT2G30570"/>
<dbReference type="TAIR" id="AT2G30570">
    <property type="gene designation" value="PSBW"/>
</dbReference>
<dbReference type="eggNOG" id="ENOG502S50E">
    <property type="taxonomic scope" value="Eukaryota"/>
</dbReference>
<dbReference type="HOGENOM" id="CLU_156148_0_0_1"/>
<dbReference type="InParanoid" id="Q39194"/>
<dbReference type="OMA" id="FALIWAN"/>
<dbReference type="OrthoDB" id="2017665at2759"/>
<dbReference type="PhylomeDB" id="Q39194"/>
<dbReference type="BioCyc" id="MetaCyc:AT2G30570-MONOMER"/>
<dbReference type="PRO" id="PR:Q39194"/>
<dbReference type="Proteomes" id="UP000006548">
    <property type="component" value="Chromosome 2"/>
</dbReference>
<dbReference type="ExpressionAtlas" id="Q39194">
    <property type="expression patterns" value="baseline and differential"/>
</dbReference>
<dbReference type="GO" id="GO:0009535">
    <property type="term" value="C:chloroplast thylakoid membrane"/>
    <property type="evidence" value="ECO:0007005"/>
    <property type="project" value="TAIR"/>
</dbReference>
<dbReference type="GO" id="GO:0009523">
    <property type="term" value="C:photosystem II"/>
    <property type="evidence" value="ECO:0007669"/>
    <property type="project" value="UniProtKB-KW"/>
</dbReference>
<dbReference type="GO" id="GO:0015979">
    <property type="term" value="P:photosynthesis"/>
    <property type="evidence" value="ECO:0007669"/>
    <property type="project" value="UniProtKB-KW"/>
</dbReference>
<dbReference type="GO" id="GO:0042549">
    <property type="term" value="P:photosystem II stabilization"/>
    <property type="evidence" value="ECO:0000315"/>
    <property type="project" value="TAIR"/>
</dbReference>
<dbReference type="InterPro" id="IPR009806">
    <property type="entry name" value="PSII_PsbW_class2"/>
</dbReference>
<dbReference type="PANTHER" id="PTHR34552">
    <property type="entry name" value="PHOTOSYSTEM II REACTION CENTER W PROTEIN, CHLOROPLASTIC"/>
    <property type="match status" value="1"/>
</dbReference>
<dbReference type="PANTHER" id="PTHR34552:SF12">
    <property type="entry name" value="PHOTOSYSTEM II REACTION CENTER W PROTEIN, CHLOROPLASTIC"/>
    <property type="match status" value="1"/>
</dbReference>
<dbReference type="Pfam" id="PF07123">
    <property type="entry name" value="PsbW"/>
    <property type="match status" value="1"/>
</dbReference>
<name>PSBW_ARATH</name>